<evidence type="ECO:0000255" key="1"/>
<evidence type="ECO:0000255" key="2">
    <source>
        <dbReference type="PROSITE-ProRule" id="PRU00521"/>
    </source>
</evidence>
<evidence type="ECO:0000269" key="3">
    <source ref="1"/>
</evidence>
<evidence type="ECO:0000305" key="4"/>
<organism>
    <name type="scientific">Homo sapiens</name>
    <name type="common">Human</name>
    <dbReference type="NCBI Taxonomy" id="9606"/>
    <lineage>
        <taxon>Eukaryota</taxon>
        <taxon>Metazoa</taxon>
        <taxon>Chordata</taxon>
        <taxon>Craniata</taxon>
        <taxon>Vertebrata</taxon>
        <taxon>Euteleostomi</taxon>
        <taxon>Mammalia</taxon>
        <taxon>Eutheria</taxon>
        <taxon>Euarchontoglires</taxon>
        <taxon>Primates</taxon>
        <taxon>Haplorrhini</taxon>
        <taxon>Catarrhini</taxon>
        <taxon>Hominidae</taxon>
        <taxon>Homo</taxon>
    </lineage>
</organism>
<accession>Q8NGL9</accession>
<accession>Q6IEV8</accession>
<dbReference type="EMBL" id="AB065773">
    <property type="protein sequence ID" value="BAC05993.1"/>
    <property type="molecule type" value="Genomic_DNA"/>
</dbReference>
<dbReference type="EMBL" id="AP001998">
    <property type="status" value="NOT_ANNOTATED_CDS"/>
    <property type="molecule type" value="Genomic_DNA"/>
</dbReference>
<dbReference type="EMBL" id="BK004504">
    <property type="protein sequence ID" value="DAA04902.1"/>
    <property type="molecule type" value="Genomic_DNA"/>
</dbReference>
<dbReference type="RefSeq" id="NP_001004701.2">
    <property type="nucleotide sequence ID" value="NM_001004701.2"/>
</dbReference>
<dbReference type="SMR" id="Q8NGL9"/>
<dbReference type="FunCoup" id="Q8NGL9">
    <property type="interactions" value="416"/>
</dbReference>
<dbReference type="STRING" id="9606.ENSP00000485295"/>
<dbReference type="GlyCosmos" id="Q8NGL9">
    <property type="glycosylation" value="1 site, No reported glycans"/>
</dbReference>
<dbReference type="GlyGen" id="Q8NGL9">
    <property type="glycosylation" value="1 site"/>
</dbReference>
<dbReference type="iPTMnet" id="Q8NGL9"/>
<dbReference type="PhosphoSitePlus" id="Q8NGL9"/>
<dbReference type="BioMuta" id="OR4C16"/>
<dbReference type="DMDM" id="83305198"/>
<dbReference type="MassIVE" id="Q8NGL9"/>
<dbReference type="PaxDb" id="9606-ENSP00000324913"/>
<dbReference type="PeptideAtlas" id="Q8NGL9"/>
<dbReference type="ProteomicsDB" id="73551"/>
<dbReference type="Antibodypedia" id="78655">
    <property type="antibodies" value="102 antibodies from 20 providers"/>
</dbReference>
<dbReference type="DNASU" id="219428"/>
<dbReference type="Ensembl" id="ENST00000623907.1">
    <property type="protein sequence ID" value="ENSP00000485295.1"/>
    <property type="gene ID" value="ENSG00000279514.2"/>
</dbReference>
<dbReference type="GeneID" id="219428"/>
<dbReference type="KEGG" id="hsa:219428"/>
<dbReference type="MANE-Select" id="ENST00000623907.1">
    <property type="protein sequence ID" value="ENSP00000485295.1"/>
    <property type="RefSeq nucleotide sequence ID" value="NM_001004701.2"/>
    <property type="RefSeq protein sequence ID" value="NP_001004701.2"/>
</dbReference>
<dbReference type="UCSC" id="uc010rih.2">
    <property type="organism name" value="human"/>
</dbReference>
<dbReference type="AGR" id="HGNC:15172"/>
<dbReference type="CTD" id="219428"/>
<dbReference type="GeneCards" id="OR4C16"/>
<dbReference type="HGNC" id="HGNC:15172">
    <property type="gene designation" value="OR4C16"/>
</dbReference>
<dbReference type="HPA" id="ENSG00000279514">
    <property type="expression patterns" value="Not detected"/>
</dbReference>
<dbReference type="neXtProt" id="NX_Q8NGL9"/>
<dbReference type="PharmGKB" id="PA32258"/>
<dbReference type="VEuPathDB" id="HostDB:ENSG00000279514"/>
<dbReference type="eggNOG" id="ENOG502SHD5">
    <property type="taxonomic scope" value="Eukaryota"/>
</dbReference>
<dbReference type="GeneTree" id="ENSGT00940000154976"/>
<dbReference type="HOGENOM" id="CLU_012526_8_1_1"/>
<dbReference type="InParanoid" id="Q8NGL9"/>
<dbReference type="OMA" id="LMCSYVN"/>
<dbReference type="OrthoDB" id="10017003at2759"/>
<dbReference type="PAN-GO" id="Q8NGL9">
    <property type="GO annotations" value="2 GO annotations based on evolutionary models"/>
</dbReference>
<dbReference type="PhylomeDB" id="Q8NGL9"/>
<dbReference type="TreeFam" id="TF337251"/>
<dbReference type="PathwayCommons" id="Q8NGL9"/>
<dbReference type="Reactome" id="R-HSA-9752946">
    <property type="pathway name" value="Expression and translocation of olfactory receptors"/>
</dbReference>
<dbReference type="BioGRID-ORCS" id="219428">
    <property type="hits" value="14 hits in 733 CRISPR screens"/>
</dbReference>
<dbReference type="GeneWiki" id="OR4C16"/>
<dbReference type="GenomeRNAi" id="219428"/>
<dbReference type="Pharos" id="Q8NGL9">
    <property type="development level" value="Tdark"/>
</dbReference>
<dbReference type="PRO" id="PR:Q8NGL9"/>
<dbReference type="Proteomes" id="UP000005640">
    <property type="component" value="Chromosome 11"/>
</dbReference>
<dbReference type="RNAct" id="Q8NGL9">
    <property type="molecule type" value="protein"/>
</dbReference>
<dbReference type="Bgee" id="ENSG00000279514">
    <property type="expression patterns" value="Expressed in sural nerve"/>
</dbReference>
<dbReference type="GO" id="GO:0005886">
    <property type="term" value="C:plasma membrane"/>
    <property type="evidence" value="ECO:0000318"/>
    <property type="project" value="GO_Central"/>
</dbReference>
<dbReference type="GO" id="GO:0004930">
    <property type="term" value="F:G protein-coupled receptor activity"/>
    <property type="evidence" value="ECO:0007669"/>
    <property type="project" value="UniProtKB-KW"/>
</dbReference>
<dbReference type="GO" id="GO:0004984">
    <property type="term" value="F:olfactory receptor activity"/>
    <property type="evidence" value="ECO:0000318"/>
    <property type="project" value="GO_Central"/>
</dbReference>
<dbReference type="CDD" id="cd15939">
    <property type="entry name" value="7tmA_OR4A-like"/>
    <property type="match status" value="1"/>
</dbReference>
<dbReference type="FunFam" id="1.20.1070.10:FF:000007">
    <property type="entry name" value="Olfactory receptor"/>
    <property type="match status" value="1"/>
</dbReference>
<dbReference type="Gene3D" id="1.20.1070.10">
    <property type="entry name" value="Rhodopsin 7-helix transmembrane proteins"/>
    <property type="match status" value="1"/>
</dbReference>
<dbReference type="InterPro" id="IPR000276">
    <property type="entry name" value="GPCR_Rhodpsn"/>
</dbReference>
<dbReference type="InterPro" id="IPR017452">
    <property type="entry name" value="GPCR_Rhodpsn_7TM"/>
</dbReference>
<dbReference type="InterPro" id="IPR000725">
    <property type="entry name" value="Olfact_rcpt"/>
</dbReference>
<dbReference type="InterPro" id="IPR050427">
    <property type="entry name" value="Olfactory_Receptors"/>
</dbReference>
<dbReference type="PANTHER" id="PTHR48002">
    <property type="entry name" value="OLFACTORY RECEPTOR"/>
    <property type="match status" value="1"/>
</dbReference>
<dbReference type="Pfam" id="PF13853">
    <property type="entry name" value="7tm_4"/>
    <property type="match status" value="1"/>
</dbReference>
<dbReference type="PRINTS" id="PR00237">
    <property type="entry name" value="GPCRRHODOPSN"/>
</dbReference>
<dbReference type="PRINTS" id="PR00245">
    <property type="entry name" value="OLFACTORYR"/>
</dbReference>
<dbReference type="SUPFAM" id="SSF81321">
    <property type="entry name" value="Family A G protein-coupled receptor-like"/>
    <property type="match status" value="1"/>
</dbReference>
<dbReference type="PROSITE" id="PS00237">
    <property type="entry name" value="G_PROTEIN_RECEP_F1_1"/>
    <property type="match status" value="1"/>
</dbReference>
<dbReference type="PROSITE" id="PS50262">
    <property type="entry name" value="G_PROTEIN_RECEP_F1_2"/>
    <property type="match status" value="1"/>
</dbReference>
<keyword id="KW-1003">Cell membrane</keyword>
<keyword id="KW-1015">Disulfide bond</keyword>
<keyword id="KW-0297">G-protein coupled receptor</keyword>
<keyword id="KW-0325">Glycoprotein</keyword>
<keyword id="KW-0472">Membrane</keyword>
<keyword id="KW-0552">Olfaction</keyword>
<keyword id="KW-0675">Receptor</keyword>
<keyword id="KW-1185">Reference proteome</keyword>
<keyword id="KW-0716">Sensory transduction</keyword>
<keyword id="KW-0807">Transducer</keyword>
<keyword id="KW-0812">Transmembrane</keyword>
<keyword id="KW-1133">Transmembrane helix</keyword>
<comment type="function">
    <text evidence="4">Odorant receptor.</text>
</comment>
<comment type="subcellular location">
    <subcellularLocation>
        <location>Cell membrane</location>
        <topology>Multi-pass membrane protein</topology>
    </subcellularLocation>
</comment>
<comment type="similarity">
    <text evidence="2">Belongs to the G-protein coupled receptor 1 family.</text>
</comment>
<comment type="online information" name="Human Olfactory Receptor Data Exploratorium (HORDE)">
    <link uri="http://genome.weizmann.ac.il/horde/card/index/symbol:OR4C16"/>
</comment>
<gene>
    <name type="primary">OR4C16</name>
</gene>
<reference key="1">
    <citation type="submission" date="2001-07" db="EMBL/GenBank/DDBJ databases">
        <title>Genome-wide discovery and analysis of human seven transmembrane helix receptor genes.</title>
        <authorList>
            <person name="Suwa M."/>
            <person name="Sato T."/>
            <person name="Okouchi I."/>
            <person name="Arita M."/>
            <person name="Futami K."/>
            <person name="Matsumoto S."/>
            <person name="Tsutsumi S."/>
            <person name="Aburatani H."/>
            <person name="Asai K."/>
            <person name="Akiyama Y."/>
        </authorList>
    </citation>
    <scope>NUCLEOTIDE SEQUENCE [GENOMIC DNA]</scope>
    <scope>VARIANTS ALA-49; ALA-76 AND PRO-259</scope>
</reference>
<reference key="2">
    <citation type="journal article" date="2006" name="Nature">
        <title>Human chromosome 11 DNA sequence and analysis including novel gene identification.</title>
        <authorList>
            <person name="Taylor T.D."/>
            <person name="Noguchi H."/>
            <person name="Totoki Y."/>
            <person name="Toyoda A."/>
            <person name="Kuroki Y."/>
            <person name="Dewar K."/>
            <person name="Lloyd C."/>
            <person name="Itoh T."/>
            <person name="Takeda T."/>
            <person name="Kim D.-W."/>
            <person name="She X."/>
            <person name="Barlow K.F."/>
            <person name="Bloom T."/>
            <person name="Bruford E."/>
            <person name="Chang J.L."/>
            <person name="Cuomo C.A."/>
            <person name="Eichler E."/>
            <person name="FitzGerald M.G."/>
            <person name="Jaffe D.B."/>
            <person name="LaButti K."/>
            <person name="Nicol R."/>
            <person name="Park H.-S."/>
            <person name="Seaman C."/>
            <person name="Sougnez C."/>
            <person name="Yang X."/>
            <person name="Zimmer A.R."/>
            <person name="Zody M.C."/>
            <person name="Birren B.W."/>
            <person name="Nusbaum C."/>
            <person name="Fujiyama A."/>
            <person name="Hattori M."/>
            <person name="Rogers J."/>
            <person name="Lander E.S."/>
            <person name="Sakaki Y."/>
        </authorList>
    </citation>
    <scope>NUCLEOTIDE SEQUENCE [LARGE SCALE GENOMIC DNA]</scope>
</reference>
<reference key="3">
    <citation type="journal article" date="2004" name="Proc. Natl. Acad. Sci. U.S.A.">
        <title>The human olfactory receptor gene family.</title>
        <authorList>
            <person name="Malnic B."/>
            <person name="Godfrey P.A."/>
            <person name="Buck L.B."/>
        </authorList>
    </citation>
    <scope>IDENTIFICATION</scope>
</reference>
<reference key="4">
    <citation type="journal article" date="2004" name="Proc. Natl. Acad. Sci. U.S.A.">
        <authorList>
            <person name="Malnic B."/>
            <person name="Godfrey P.A."/>
            <person name="Buck L.B."/>
        </authorList>
    </citation>
    <scope>ERRATUM OF PUBMED:14983052</scope>
</reference>
<sequence>MQLNNNVTEFILLGLTQDPFWKKIVFVIFLRLYLGTLLGNLLIIISVKTSQALKNPMFFFLFYLSLSDTCLSTSITPRMIVDALLKKTTISFSECMIQVFSSHVFGCLEIFILILTAVDRYVDICKPLHYMTIISQWVCGVLMAVAWVGSCVHSLVQIFLALSLPFCGPNVINHCFCDLQPLLKQACSETYVVNLLLVSNSGAICAVSYVMLIFSYVIFLHSLRNHSAEVIKKALSTCVSHIIVVILFFGPCIFMYTCLATVFPMDKMIAVFYTVGTSFLNPVIYTLKNTEVKSAMRKLWSKKLITDDKR</sequence>
<proteinExistence type="inferred from homology"/>
<feature type="chain" id="PRO_0000150536" description="Olfactory receptor 4C16">
    <location>
        <begin position="1"/>
        <end position="310"/>
    </location>
</feature>
<feature type="topological domain" description="Extracellular" evidence="1">
    <location>
        <begin position="1"/>
        <end position="23"/>
    </location>
</feature>
<feature type="transmembrane region" description="Helical; Name=1" evidence="1">
    <location>
        <begin position="24"/>
        <end position="47"/>
    </location>
</feature>
<feature type="topological domain" description="Cytoplasmic" evidence="1">
    <location>
        <begin position="48"/>
        <end position="55"/>
    </location>
</feature>
<feature type="transmembrane region" description="Helical; Name=2" evidence="1">
    <location>
        <begin position="56"/>
        <end position="77"/>
    </location>
</feature>
<feature type="topological domain" description="Extracellular" evidence="1">
    <location>
        <begin position="78"/>
        <end position="98"/>
    </location>
</feature>
<feature type="transmembrane region" description="Helical; Name=3" evidence="1">
    <location>
        <begin position="99"/>
        <end position="118"/>
    </location>
</feature>
<feature type="topological domain" description="Cytoplasmic" evidence="1">
    <location>
        <begin position="119"/>
        <end position="137"/>
    </location>
</feature>
<feature type="transmembrane region" description="Helical; Name=4" evidence="1">
    <location>
        <begin position="138"/>
        <end position="156"/>
    </location>
</feature>
<feature type="topological domain" description="Extracellular" evidence="1">
    <location>
        <begin position="157"/>
        <end position="193"/>
    </location>
</feature>
<feature type="transmembrane region" description="Helical; Name=5" evidence="1">
    <location>
        <begin position="194"/>
        <end position="217"/>
    </location>
</feature>
<feature type="topological domain" description="Cytoplasmic" evidence="1">
    <location>
        <begin position="218"/>
        <end position="233"/>
    </location>
</feature>
<feature type="transmembrane region" description="Helical; Name=6" evidence="1">
    <location>
        <begin position="234"/>
        <end position="256"/>
    </location>
</feature>
<feature type="topological domain" description="Extracellular" evidence="1">
    <location>
        <begin position="257"/>
        <end position="267"/>
    </location>
</feature>
<feature type="transmembrane region" description="Helical; Name=7" evidence="1">
    <location>
        <begin position="268"/>
        <end position="287"/>
    </location>
</feature>
<feature type="topological domain" description="Cytoplasmic" evidence="1">
    <location>
        <begin position="288"/>
        <end position="310"/>
    </location>
</feature>
<feature type="glycosylation site" description="N-linked (GlcNAc...) asparagine" evidence="1">
    <location>
        <position position="6"/>
    </location>
</feature>
<feature type="disulfide bond" evidence="2">
    <location>
        <begin position="95"/>
        <end position="187"/>
    </location>
</feature>
<feature type="sequence variant" id="VAR_053165" description="In dbSNP:rs12800642.">
    <original>V</original>
    <variation>L</variation>
    <location>
        <position position="25"/>
    </location>
</feature>
<feature type="sequence variant" id="VAR_053166" description="In dbSNP:rs558465." evidence="3">
    <original>T</original>
    <variation>A</variation>
    <location>
        <position position="49"/>
    </location>
</feature>
<feature type="sequence variant" id="VAR_034193" description="In dbSNP:rs557590." evidence="3">
    <original>T</original>
    <variation>A</variation>
    <location>
        <position position="76"/>
    </location>
</feature>
<feature type="sequence variant" id="VAR_053167" description="In dbSNP:rs12288690.">
    <original>A</original>
    <variation>T</variation>
    <location>
        <position position="203"/>
    </location>
</feature>
<feature type="sequence variant" id="VAR_053168" description="In dbSNP:rs559449." evidence="3">
    <original>L</original>
    <variation>P</variation>
    <location>
        <position position="259"/>
    </location>
</feature>
<protein>
    <recommendedName>
        <fullName>Olfactory receptor 4C16</fullName>
    </recommendedName>
    <alternativeName>
        <fullName>Olfactory receptor OR11-135</fullName>
    </alternativeName>
</protein>
<name>OR4CG_HUMAN</name>